<feature type="chain" id="PRO_1000196675" description="Adenosylhomocysteinase">
    <location>
        <begin position="1"/>
        <end position="466"/>
    </location>
</feature>
<feature type="binding site" evidence="1">
    <location>
        <position position="57"/>
    </location>
    <ligand>
        <name>substrate</name>
    </ligand>
</feature>
<feature type="binding site" evidence="1">
    <location>
        <position position="132"/>
    </location>
    <ligand>
        <name>substrate</name>
    </ligand>
</feature>
<feature type="binding site" evidence="1">
    <location>
        <position position="192"/>
    </location>
    <ligand>
        <name>substrate</name>
    </ligand>
</feature>
<feature type="binding site" evidence="1">
    <location>
        <begin position="193"/>
        <end position="195"/>
    </location>
    <ligand>
        <name>NAD(+)</name>
        <dbReference type="ChEBI" id="CHEBI:57540"/>
    </ligand>
</feature>
<feature type="binding site" evidence="1">
    <location>
        <position position="222"/>
    </location>
    <ligand>
        <name>substrate</name>
    </ligand>
</feature>
<feature type="binding site" evidence="1">
    <location>
        <position position="226"/>
    </location>
    <ligand>
        <name>substrate</name>
    </ligand>
</feature>
<feature type="binding site" evidence="1">
    <location>
        <position position="227"/>
    </location>
    <ligand>
        <name>NAD(+)</name>
        <dbReference type="ChEBI" id="CHEBI:57540"/>
    </ligand>
</feature>
<feature type="binding site" evidence="1">
    <location>
        <begin position="256"/>
        <end position="261"/>
    </location>
    <ligand>
        <name>NAD(+)</name>
        <dbReference type="ChEBI" id="CHEBI:57540"/>
    </ligand>
</feature>
<feature type="binding site" evidence="1">
    <location>
        <position position="279"/>
    </location>
    <ligand>
        <name>NAD(+)</name>
        <dbReference type="ChEBI" id="CHEBI:57540"/>
    </ligand>
</feature>
<feature type="binding site" evidence="1">
    <location>
        <position position="314"/>
    </location>
    <ligand>
        <name>NAD(+)</name>
        <dbReference type="ChEBI" id="CHEBI:57540"/>
    </ligand>
</feature>
<feature type="binding site" evidence="1">
    <location>
        <begin position="335"/>
        <end position="337"/>
    </location>
    <ligand>
        <name>NAD(+)</name>
        <dbReference type="ChEBI" id="CHEBI:57540"/>
    </ligand>
</feature>
<feature type="binding site" evidence="1">
    <location>
        <position position="380"/>
    </location>
    <ligand>
        <name>NAD(+)</name>
        <dbReference type="ChEBI" id="CHEBI:57540"/>
    </ligand>
</feature>
<reference key="1">
    <citation type="journal article" date="2010" name="Appl. Environ. Microbiol.">
        <title>Conserved symbiotic plasmid DNA sequences in the multireplicon pangenomic structure of Rhizobium etli.</title>
        <authorList>
            <person name="Gonzalez V."/>
            <person name="Acosta J.L."/>
            <person name="Santamaria R.I."/>
            <person name="Bustos P."/>
            <person name="Fernandez J.L."/>
            <person name="Hernandez Gonzalez I.L."/>
            <person name="Diaz R."/>
            <person name="Flores M."/>
            <person name="Palacios R."/>
            <person name="Mora J."/>
            <person name="Davila G."/>
        </authorList>
    </citation>
    <scope>NUCLEOTIDE SEQUENCE [LARGE SCALE GENOMIC DNA]</scope>
    <source>
        <strain>CIAT 652</strain>
    </source>
</reference>
<sequence>MSTEKDYVVADIGLADFGRKEITIAETEMPGLMSCRAEFGDAKPLKGARITGSLHMTIQTAVLIETLVALGAEVRWASCNIFSTQDHAAAAIAAAGVPVFAIKGESLEDYWVYTDKIFQWADGGLSNMILDDGGDATMYILLGARAEAGEDVLSHPHSEEEEILFAQIKKRLAASPGWFTKQRDAIKGVTEETTTGVNRLYQLSQKGLLPFPAINVNDSVTKSKFDNKYGCKESLVDGIRRGTDVMMAGKVAVVCGYGDVGKGSAASLSGAGARVKVTEADPICALQAAMDGYEVVLLEDVVSSADIFITTTGNKDVIRIDHMREMKDMAIVGNIGHFDNEIEVAALRNLKWTNVKPQVDLIEFPKGNRIILLSEGRLLNLGNATGHPSFVMSASFTNQTLAQIELFTKPGQYENKVYILPKHLDEKVARLHLDKLGVKLTQLSEEQAAYIGVSPKGPFKSDHYRY</sequence>
<accession>B3PVW2</accession>
<name>SAHH_RHIE6</name>
<dbReference type="EC" id="3.13.2.1" evidence="1"/>
<dbReference type="EMBL" id="CP001074">
    <property type="protein sequence ID" value="ACE89035.1"/>
    <property type="molecule type" value="Genomic_DNA"/>
</dbReference>
<dbReference type="SMR" id="B3PVW2"/>
<dbReference type="KEGG" id="rec:RHECIAT_CH0000032"/>
<dbReference type="eggNOG" id="COG0499">
    <property type="taxonomic scope" value="Bacteria"/>
</dbReference>
<dbReference type="HOGENOM" id="CLU_025194_2_1_5"/>
<dbReference type="UniPathway" id="UPA00314">
    <property type="reaction ID" value="UER00076"/>
</dbReference>
<dbReference type="Proteomes" id="UP000008817">
    <property type="component" value="Chromosome"/>
</dbReference>
<dbReference type="GO" id="GO:0005829">
    <property type="term" value="C:cytosol"/>
    <property type="evidence" value="ECO:0007669"/>
    <property type="project" value="TreeGrafter"/>
</dbReference>
<dbReference type="GO" id="GO:0004013">
    <property type="term" value="F:adenosylhomocysteinase activity"/>
    <property type="evidence" value="ECO:0007669"/>
    <property type="project" value="UniProtKB-UniRule"/>
</dbReference>
<dbReference type="GO" id="GO:0071269">
    <property type="term" value="P:L-homocysteine biosynthetic process"/>
    <property type="evidence" value="ECO:0007669"/>
    <property type="project" value="UniProtKB-UniRule"/>
</dbReference>
<dbReference type="GO" id="GO:0006730">
    <property type="term" value="P:one-carbon metabolic process"/>
    <property type="evidence" value="ECO:0007669"/>
    <property type="project" value="UniProtKB-KW"/>
</dbReference>
<dbReference type="GO" id="GO:0033353">
    <property type="term" value="P:S-adenosylmethionine cycle"/>
    <property type="evidence" value="ECO:0007669"/>
    <property type="project" value="TreeGrafter"/>
</dbReference>
<dbReference type="CDD" id="cd00401">
    <property type="entry name" value="SAHH"/>
    <property type="match status" value="1"/>
</dbReference>
<dbReference type="FunFam" id="3.40.50.720:FF:000004">
    <property type="entry name" value="Adenosylhomocysteinase"/>
    <property type="match status" value="1"/>
</dbReference>
<dbReference type="Gene3D" id="3.40.50.1480">
    <property type="entry name" value="Adenosylhomocysteinase-like"/>
    <property type="match status" value="1"/>
</dbReference>
<dbReference type="Gene3D" id="3.40.50.720">
    <property type="entry name" value="NAD(P)-binding Rossmann-like Domain"/>
    <property type="match status" value="1"/>
</dbReference>
<dbReference type="HAMAP" id="MF_00563">
    <property type="entry name" value="AdoHcyase"/>
    <property type="match status" value="1"/>
</dbReference>
<dbReference type="InterPro" id="IPR042172">
    <property type="entry name" value="Adenosylhomocyst_ase-like_sf"/>
</dbReference>
<dbReference type="InterPro" id="IPR000043">
    <property type="entry name" value="Adenosylhomocysteinase-like"/>
</dbReference>
<dbReference type="InterPro" id="IPR015878">
    <property type="entry name" value="Ado_hCys_hydrolase_NAD-bd"/>
</dbReference>
<dbReference type="InterPro" id="IPR036291">
    <property type="entry name" value="NAD(P)-bd_dom_sf"/>
</dbReference>
<dbReference type="InterPro" id="IPR020082">
    <property type="entry name" value="S-Ado-L-homoCys_hydrolase_CS"/>
</dbReference>
<dbReference type="NCBIfam" id="TIGR00936">
    <property type="entry name" value="ahcY"/>
    <property type="match status" value="1"/>
</dbReference>
<dbReference type="NCBIfam" id="NF004005">
    <property type="entry name" value="PRK05476.2-3"/>
    <property type="match status" value="1"/>
</dbReference>
<dbReference type="PANTHER" id="PTHR23420">
    <property type="entry name" value="ADENOSYLHOMOCYSTEINASE"/>
    <property type="match status" value="1"/>
</dbReference>
<dbReference type="PANTHER" id="PTHR23420:SF0">
    <property type="entry name" value="ADENOSYLHOMOCYSTEINASE"/>
    <property type="match status" value="1"/>
</dbReference>
<dbReference type="Pfam" id="PF05221">
    <property type="entry name" value="AdoHcyase"/>
    <property type="match status" value="1"/>
</dbReference>
<dbReference type="Pfam" id="PF00670">
    <property type="entry name" value="AdoHcyase_NAD"/>
    <property type="match status" value="1"/>
</dbReference>
<dbReference type="PIRSF" id="PIRSF001109">
    <property type="entry name" value="Ad_hcy_hydrolase"/>
    <property type="match status" value="1"/>
</dbReference>
<dbReference type="SMART" id="SM00996">
    <property type="entry name" value="AdoHcyase"/>
    <property type="match status" value="1"/>
</dbReference>
<dbReference type="SMART" id="SM00997">
    <property type="entry name" value="AdoHcyase_NAD"/>
    <property type="match status" value="1"/>
</dbReference>
<dbReference type="SUPFAM" id="SSF52283">
    <property type="entry name" value="Formate/glycerate dehydrogenase catalytic domain-like"/>
    <property type="match status" value="1"/>
</dbReference>
<dbReference type="SUPFAM" id="SSF51735">
    <property type="entry name" value="NAD(P)-binding Rossmann-fold domains"/>
    <property type="match status" value="1"/>
</dbReference>
<dbReference type="PROSITE" id="PS00738">
    <property type="entry name" value="ADOHCYASE_1"/>
    <property type="match status" value="1"/>
</dbReference>
<dbReference type="PROSITE" id="PS00739">
    <property type="entry name" value="ADOHCYASE_2"/>
    <property type="match status" value="1"/>
</dbReference>
<organism>
    <name type="scientific">Rhizobium etli (strain CIAT 652)</name>
    <dbReference type="NCBI Taxonomy" id="491916"/>
    <lineage>
        <taxon>Bacteria</taxon>
        <taxon>Pseudomonadati</taxon>
        <taxon>Pseudomonadota</taxon>
        <taxon>Alphaproteobacteria</taxon>
        <taxon>Hyphomicrobiales</taxon>
        <taxon>Rhizobiaceae</taxon>
        <taxon>Rhizobium/Agrobacterium group</taxon>
        <taxon>Rhizobium</taxon>
    </lineage>
</organism>
<protein>
    <recommendedName>
        <fullName evidence="1">Adenosylhomocysteinase</fullName>
        <ecNumber evidence="1">3.13.2.1</ecNumber>
    </recommendedName>
    <alternativeName>
        <fullName evidence="1">S-adenosyl-L-homocysteine hydrolase</fullName>
        <shortName evidence="1">AdoHcyase</shortName>
    </alternativeName>
</protein>
<proteinExistence type="inferred from homology"/>
<gene>
    <name evidence="1" type="primary">ahcY</name>
    <name type="ordered locus">RHECIAT_CH0000032</name>
</gene>
<keyword id="KW-0963">Cytoplasm</keyword>
<keyword id="KW-0378">Hydrolase</keyword>
<keyword id="KW-0520">NAD</keyword>
<keyword id="KW-0554">One-carbon metabolism</keyword>
<comment type="function">
    <text evidence="1">May play a key role in the regulation of the intracellular concentration of adenosylhomocysteine.</text>
</comment>
<comment type="catalytic activity">
    <reaction evidence="1">
        <text>S-adenosyl-L-homocysteine + H2O = L-homocysteine + adenosine</text>
        <dbReference type="Rhea" id="RHEA:21708"/>
        <dbReference type="ChEBI" id="CHEBI:15377"/>
        <dbReference type="ChEBI" id="CHEBI:16335"/>
        <dbReference type="ChEBI" id="CHEBI:57856"/>
        <dbReference type="ChEBI" id="CHEBI:58199"/>
        <dbReference type="EC" id="3.13.2.1"/>
    </reaction>
</comment>
<comment type="cofactor">
    <cofactor evidence="1">
        <name>NAD(+)</name>
        <dbReference type="ChEBI" id="CHEBI:57540"/>
    </cofactor>
    <text evidence="1">Binds 1 NAD(+) per subunit.</text>
</comment>
<comment type="pathway">
    <text evidence="1">Amino-acid biosynthesis; L-homocysteine biosynthesis; L-homocysteine from S-adenosyl-L-homocysteine: step 1/1.</text>
</comment>
<comment type="subcellular location">
    <subcellularLocation>
        <location evidence="1">Cytoplasm</location>
    </subcellularLocation>
</comment>
<comment type="similarity">
    <text evidence="1">Belongs to the adenosylhomocysteinase family.</text>
</comment>
<evidence type="ECO:0000255" key="1">
    <source>
        <dbReference type="HAMAP-Rule" id="MF_00563"/>
    </source>
</evidence>